<sequence length="285" mass="30680">MTQIIDGKALAAKLQGQLAEKTAKLKEETALVPGLVVILVGDNPASQVYVRNKERSALAAGSRSEVVRVPETITQEELLDLIAKYNQDPAWHGILVQLPLPKHIDEEAVLLAIDPEKDVDGFHPLNMGRLWSGHPVMIPSTPAGIMEMFHEYGIDLEGKNAVVIGRSNIVGKPMAQLLLAKNATVTLTHSRTHNLAKVAAKADILVVAIGRAKFVTADFVKPGAVVIDVGMNRDENGKLCGDVDYEAVAPLASHITPVPGGVGPMTITMLMEQTYQAALRTLDRK</sequence>
<keyword id="KW-0028">Amino-acid biosynthesis</keyword>
<keyword id="KW-0368">Histidine biosynthesis</keyword>
<keyword id="KW-0378">Hydrolase</keyword>
<keyword id="KW-0486">Methionine biosynthesis</keyword>
<keyword id="KW-0511">Multifunctional enzyme</keyword>
<keyword id="KW-0521">NADP</keyword>
<keyword id="KW-0554">One-carbon metabolism</keyword>
<keyword id="KW-0560">Oxidoreductase</keyword>
<keyword id="KW-0658">Purine biosynthesis</keyword>
<keyword id="KW-1185">Reference proteome</keyword>
<dbReference type="EC" id="1.5.1.5" evidence="1"/>
<dbReference type="EC" id="3.5.4.9" evidence="1"/>
<dbReference type="EMBL" id="CP000410">
    <property type="protein sequence ID" value="ABJ54164.1"/>
    <property type="status" value="ALT_INIT"/>
    <property type="molecule type" value="Genomic_DNA"/>
</dbReference>
<dbReference type="RefSeq" id="WP_000192079.1">
    <property type="nucleotide sequence ID" value="NZ_JAMLJR010000018.1"/>
</dbReference>
<dbReference type="SMR" id="Q04L84"/>
<dbReference type="PaxDb" id="373153-SPD_0721"/>
<dbReference type="KEGG" id="spd:SPD_0721"/>
<dbReference type="eggNOG" id="COG0190">
    <property type="taxonomic scope" value="Bacteria"/>
</dbReference>
<dbReference type="HOGENOM" id="CLU_034045_2_1_9"/>
<dbReference type="UniPathway" id="UPA00193"/>
<dbReference type="Proteomes" id="UP000001452">
    <property type="component" value="Chromosome"/>
</dbReference>
<dbReference type="GO" id="GO:0005829">
    <property type="term" value="C:cytosol"/>
    <property type="evidence" value="ECO:0007669"/>
    <property type="project" value="TreeGrafter"/>
</dbReference>
<dbReference type="GO" id="GO:0004477">
    <property type="term" value="F:methenyltetrahydrofolate cyclohydrolase activity"/>
    <property type="evidence" value="ECO:0007669"/>
    <property type="project" value="UniProtKB-UniRule"/>
</dbReference>
<dbReference type="GO" id="GO:0004488">
    <property type="term" value="F:methylenetetrahydrofolate dehydrogenase (NADP+) activity"/>
    <property type="evidence" value="ECO:0007669"/>
    <property type="project" value="UniProtKB-UniRule"/>
</dbReference>
<dbReference type="GO" id="GO:0000105">
    <property type="term" value="P:L-histidine biosynthetic process"/>
    <property type="evidence" value="ECO:0007669"/>
    <property type="project" value="UniProtKB-KW"/>
</dbReference>
<dbReference type="GO" id="GO:0009086">
    <property type="term" value="P:methionine biosynthetic process"/>
    <property type="evidence" value="ECO:0007669"/>
    <property type="project" value="UniProtKB-KW"/>
</dbReference>
<dbReference type="GO" id="GO:0006164">
    <property type="term" value="P:purine nucleotide biosynthetic process"/>
    <property type="evidence" value="ECO:0007669"/>
    <property type="project" value="UniProtKB-KW"/>
</dbReference>
<dbReference type="GO" id="GO:0035999">
    <property type="term" value="P:tetrahydrofolate interconversion"/>
    <property type="evidence" value="ECO:0007669"/>
    <property type="project" value="UniProtKB-UniRule"/>
</dbReference>
<dbReference type="CDD" id="cd01080">
    <property type="entry name" value="NAD_bind_m-THF_DH_Cyclohyd"/>
    <property type="match status" value="1"/>
</dbReference>
<dbReference type="FunFam" id="3.40.50.720:FF:000094">
    <property type="entry name" value="Bifunctional protein FolD"/>
    <property type="match status" value="1"/>
</dbReference>
<dbReference type="FunFam" id="3.40.50.10860:FF:000005">
    <property type="entry name" value="C-1-tetrahydrofolate synthase, cytoplasmic, putative"/>
    <property type="match status" value="1"/>
</dbReference>
<dbReference type="Gene3D" id="3.40.50.10860">
    <property type="entry name" value="Leucine Dehydrogenase, chain A, domain 1"/>
    <property type="match status" value="1"/>
</dbReference>
<dbReference type="Gene3D" id="3.40.50.720">
    <property type="entry name" value="NAD(P)-binding Rossmann-like Domain"/>
    <property type="match status" value="1"/>
</dbReference>
<dbReference type="HAMAP" id="MF_01576">
    <property type="entry name" value="THF_DHG_CYH"/>
    <property type="match status" value="1"/>
</dbReference>
<dbReference type="InterPro" id="IPR046346">
    <property type="entry name" value="Aminoacid_DH-like_N_sf"/>
</dbReference>
<dbReference type="InterPro" id="IPR036291">
    <property type="entry name" value="NAD(P)-bd_dom_sf"/>
</dbReference>
<dbReference type="InterPro" id="IPR000672">
    <property type="entry name" value="THF_DH/CycHdrlase"/>
</dbReference>
<dbReference type="InterPro" id="IPR020630">
    <property type="entry name" value="THF_DH/CycHdrlase_cat_dom"/>
</dbReference>
<dbReference type="InterPro" id="IPR020867">
    <property type="entry name" value="THF_DH/CycHdrlase_CS"/>
</dbReference>
<dbReference type="InterPro" id="IPR020631">
    <property type="entry name" value="THF_DH/CycHdrlase_NAD-bd_dom"/>
</dbReference>
<dbReference type="NCBIfam" id="NF008058">
    <property type="entry name" value="PRK10792.1"/>
    <property type="match status" value="1"/>
</dbReference>
<dbReference type="NCBIfam" id="NF010776">
    <property type="entry name" value="PRK14179.1"/>
    <property type="match status" value="1"/>
</dbReference>
<dbReference type="NCBIfam" id="NF010783">
    <property type="entry name" value="PRK14186.1"/>
    <property type="match status" value="1"/>
</dbReference>
<dbReference type="PANTHER" id="PTHR48099:SF5">
    <property type="entry name" value="C-1-TETRAHYDROFOLATE SYNTHASE, CYTOPLASMIC"/>
    <property type="match status" value="1"/>
</dbReference>
<dbReference type="PANTHER" id="PTHR48099">
    <property type="entry name" value="C-1-TETRAHYDROFOLATE SYNTHASE, CYTOPLASMIC-RELATED"/>
    <property type="match status" value="1"/>
</dbReference>
<dbReference type="Pfam" id="PF00763">
    <property type="entry name" value="THF_DHG_CYH"/>
    <property type="match status" value="1"/>
</dbReference>
<dbReference type="Pfam" id="PF02882">
    <property type="entry name" value="THF_DHG_CYH_C"/>
    <property type="match status" value="1"/>
</dbReference>
<dbReference type="PRINTS" id="PR00085">
    <property type="entry name" value="THFDHDRGNASE"/>
</dbReference>
<dbReference type="SUPFAM" id="SSF53223">
    <property type="entry name" value="Aminoacid dehydrogenase-like, N-terminal domain"/>
    <property type="match status" value="1"/>
</dbReference>
<dbReference type="SUPFAM" id="SSF51735">
    <property type="entry name" value="NAD(P)-binding Rossmann-fold domains"/>
    <property type="match status" value="1"/>
</dbReference>
<dbReference type="PROSITE" id="PS00766">
    <property type="entry name" value="THF_DHG_CYH_1"/>
    <property type="match status" value="1"/>
</dbReference>
<dbReference type="PROSITE" id="PS00767">
    <property type="entry name" value="THF_DHG_CYH_2"/>
    <property type="match status" value="1"/>
</dbReference>
<proteinExistence type="inferred from homology"/>
<gene>
    <name evidence="1" type="primary">folD</name>
    <name type="ordered locus">SPD_0721</name>
</gene>
<organism>
    <name type="scientific">Streptococcus pneumoniae serotype 2 (strain D39 / NCTC 7466)</name>
    <dbReference type="NCBI Taxonomy" id="373153"/>
    <lineage>
        <taxon>Bacteria</taxon>
        <taxon>Bacillati</taxon>
        <taxon>Bacillota</taxon>
        <taxon>Bacilli</taxon>
        <taxon>Lactobacillales</taxon>
        <taxon>Streptococcaceae</taxon>
        <taxon>Streptococcus</taxon>
    </lineage>
</organism>
<comment type="function">
    <text evidence="1">Catalyzes the oxidation of 5,10-methylenetetrahydrofolate to 5,10-methenyltetrahydrofolate and then the hydrolysis of 5,10-methenyltetrahydrofolate to 10-formyltetrahydrofolate.</text>
</comment>
<comment type="catalytic activity">
    <reaction evidence="1">
        <text>(6R)-5,10-methylene-5,6,7,8-tetrahydrofolate + NADP(+) = (6R)-5,10-methenyltetrahydrofolate + NADPH</text>
        <dbReference type="Rhea" id="RHEA:22812"/>
        <dbReference type="ChEBI" id="CHEBI:15636"/>
        <dbReference type="ChEBI" id="CHEBI:57455"/>
        <dbReference type="ChEBI" id="CHEBI:57783"/>
        <dbReference type="ChEBI" id="CHEBI:58349"/>
        <dbReference type="EC" id="1.5.1.5"/>
    </reaction>
</comment>
<comment type="catalytic activity">
    <reaction evidence="1">
        <text>(6R)-5,10-methenyltetrahydrofolate + H2O = (6R)-10-formyltetrahydrofolate + H(+)</text>
        <dbReference type="Rhea" id="RHEA:23700"/>
        <dbReference type="ChEBI" id="CHEBI:15377"/>
        <dbReference type="ChEBI" id="CHEBI:15378"/>
        <dbReference type="ChEBI" id="CHEBI:57455"/>
        <dbReference type="ChEBI" id="CHEBI:195366"/>
        <dbReference type="EC" id="3.5.4.9"/>
    </reaction>
</comment>
<comment type="pathway">
    <text evidence="1">One-carbon metabolism; tetrahydrofolate interconversion.</text>
</comment>
<comment type="subunit">
    <text evidence="1">Homodimer.</text>
</comment>
<comment type="similarity">
    <text evidence="1">Belongs to the tetrahydrofolate dehydrogenase/cyclohydrolase family.</text>
</comment>
<comment type="sequence caution" evidence="2">
    <conflict type="erroneous initiation">
        <sequence resource="EMBL-CDS" id="ABJ54164"/>
    </conflict>
</comment>
<evidence type="ECO:0000255" key="1">
    <source>
        <dbReference type="HAMAP-Rule" id="MF_01576"/>
    </source>
</evidence>
<evidence type="ECO:0000305" key="2"/>
<protein>
    <recommendedName>
        <fullName evidence="1">Bifunctional protein FolD</fullName>
    </recommendedName>
    <domain>
        <recommendedName>
            <fullName evidence="1">Methylenetetrahydrofolate dehydrogenase</fullName>
            <ecNumber evidence="1">1.5.1.5</ecNumber>
        </recommendedName>
    </domain>
    <domain>
        <recommendedName>
            <fullName evidence="1">Methenyltetrahydrofolate cyclohydrolase</fullName>
            <ecNumber evidence="1">3.5.4.9</ecNumber>
        </recommendedName>
    </domain>
</protein>
<name>FOLD_STRP2</name>
<reference key="1">
    <citation type="journal article" date="2007" name="J. Bacteriol.">
        <title>Genome sequence of Avery's virulent serotype 2 strain D39 of Streptococcus pneumoniae and comparison with that of unencapsulated laboratory strain R6.</title>
        <authorList>
            <person name="Lanie J.A."/>
            <person name="Ng W.-L."/>
            <person name="Kazmierczak K.M."/>
            <person name="Andrzejewski T.M."/>
            <person name="Davidsen T.M."/>
            <person name="Wayne K.J."/>
            <person name="Tettelin H."/>
            <person name="Glass J.I."/>
            <person name="Winkler M.E."/>
        </authorList>
    </citation>
    <scope>NUCLEOTIDE SEQUENCE [LARGE SCALE GENOMIC DNA]</scope>
    <source>
        <strain>D39 / NCTC 7466</strain>
    </source>
</reference>
<accession>Q04L84</accession>
<feature type="chain" id="PRO_0000305882" description="Bifunctional protein FolD">
    <location>
        <begin position="1"/>
        <end position="285"/>
    </location>
</feature>
<feature type="binding site" evidence="1">
    <location>
        <begin position="165"/>
        <end position="167"/>
    </location>
    <ligand>
        <name>NADP(+)</name>
        <dbReference type="ChEBI" id="CHEBI:58349"/>
    </ligand>
</feature>
<feature type="binding site" evidence="1">
    <location>
        <position position="190"/>
    </location>
    <ligand>
        <name>NADP(+)</name>
        <dbReference type="ChEBI" id="CHEBI:58349"/>
    </ligand>
</feature>